<feature type="signal peptide" evidence="1">
    <location>
        <begin position="1"/>
        <end position="19"/>
    </location>
</feature>
<feature type="chain" id="PRO_0000013925" description="Uncharacterized protein YibG">
    <location>
        <begin position="20"/>
        <end position="153"/>
    </location>
</feature>
<dbReference type="EMBL" id="L19044">
    <property type="protein sequence ID" value="AAC95067.1"/>
    <property type="molecule type" value="Genomic_DNA"/>
</dbReference>
<dbReference type="EMBL" id="U00039">
    <property type="protein sequence ID" value="AAB18573.1"/>
    <property type="molecule type" value="Genomic_DNA"/>
</dbReference>
<dbReference type="EMBL" id="U00096">
    <property type="protein sequence ID" value="AAC76620.1"/>
    <property type="molecule type" value="Genomic_DNA"/>
</dbReference>
<dbReference type="EMBL" id="AP009048">
    <property type="protein sequence ID" value="BAE77697.1"/>
    <property type="molecule type" value="Genomic_DNA"/>
</dbReference>
<dbReference type="PIR" id="S47817">
    <property type="entry name" value="S47817"/>
</dbReference>
<dbReference type="RefSeq" id="NP_418053.1">
    <property type="nucleotide sequence ID" value="NC_000913.3"/>
</dbReference>
<dbReference type="RefSeq" id="WP_000642478.1">
    <property type="nucleotide sequence ID" value="NZ_SSZK01000022.1"/>
</dbReference>
<dbReference type="SMR" id="P32106"/>
<dbReference type="BioGRID" id="4261669">
    <property type="interactions" value="7"/>
</dbReference>
<dbReference type="FunCoup" id="P32106">
    <property type="interactions" value="62"/>
</dbReference>
<dbReference type="STRING" id="511145.b3596"/>
<dbReference type="PaxDb" id="511145-b3596"/>
<dbReference type="EnsemblBacteria" id="AAC76620">
    <property type="protein sequence ID" value="AAC76620"/>
    <property type="gene ID" value="b3596"/>
</dbReference>
<dbReference type="GeneID" id="948111"/>
<dbReference type="KEGG" id="ecj:JW3570"/>
<dbReference type="KEGG" id="eco:b3596"/>
<dbReference type="KEGG" id="ecoc:C3026_19495"/>
<dbReference type="PATRIC" id="fig|83333.103.peg.4522"/>
<dbReference type="EchoBASE" id="EB1713"/>
<dbReference type="eggNOG" id="COG0790">
    <property type="taxonomic scope" value="Bacteria"/>
</dbReference>
<dbReference type="HOGENOM" id="CLU_150058_0_0_6"/>
<dbReference type="InParanoid" id="P32106"/>
<dbReference type="OMA" id="LSCKNGP"/>
<dbReference type="OrthoDB" id="8235393at2"/>
<dbReference type="PhylomeDB" id="P32106"/>
<dbReference type="BioCyc" id="EcoCyc:EG11763-MONOMER"/>
<dbReference type="PRO" id="PR:P32106"/>
<dbReference type="Proteomes" id="UP000000625">
    <property type="component" value="Chromosome"/>
</dbReference>
<dbReference type="Gene3D" id="1.25.40.10">
    <property type="entry name" value="Tetratricopeptide repeat domain"/>
    <property type="match status" value="1"/>
</dbReference>
<dbReference type="InterPro" id="IPR011990">
    <property type="entry name" value="TPR-like_helical_dom_sf"/>
</dbReference>
<dbReference type="SUPFAM" id="SSF81901">
    <property type="entry name" value="HCP-like"/>
    <property type="match status" value="1"/>
</dbReference>
<evidence type="ECO:0000255" key="1"/>
<proteinExistence type="inferred from homology"/>
<organism>
    <name type="scientific">Escherichia coli (strain K12)</name>
    <dbReference type="NCBI Taxonomy" id="83333"/>
    <lineage>
        <taxon>Bacteria</taxon>
        <taxon>Pseudomonadati</taxon>
        <taxon>Pseudomonadota</taxon>
        <taxon>Gammaproteobacteria</taxon>
        <taxon>Enterobacterales</taxon>
        <taxon>Enterobacteriaceae</taxon>
        <taxon>Escherichia</taxon>
    </lineage>
</organism>
<name>YIBG_ECOLI</name>
<reference key="1">
    <citation type="journal article" date="1993" name="J. Bacteriol.">
        <title>Rhs elements of Escherichia coli K-12: complex composites of shared and unique components that have different evolutionary histories.</title>
        <authorList>
            <person name="Zhao S."/>
            <person name="Sandt C.H."/>
            <person name="Feulner G."/>
            <person name="Vlazny D.A."/>
            <person name="Gray J.A."/>
            <person name="Hill C.W."/>
        </authorList>
    </citation>
    <scope>NUCLEOTIDE SEQUENCE [GENOMIC DNA]</scope>
    <source>
        <strain>K12</strain>
    </source>
</reference>
<reference key="2">
    <citation type="journal article" date="1994" name="Nucleic Acids Res.">
        <title>Analysis of the Escherichia coli genome. V. DNA sequence of the region from 76.0 to 81.5 minutes.</title>
        <authorList>
            <person name="Sofia H.J."/>
            <person name="Burland V."/>
            <person name="Daniels D.L."/>
            <person name="Plunkett G. III"/>
            <person name="Blattner F.R."/>
        </authorList>
    </citation>
    <scope>NUCLEOTIDE SEQUENCE [LARGE SCALE GENOMIC DNA]</scope>
    <source>
        <strain>K12 / MG1655 / ATCC 47076</strain>
    </source>
</reference>
<reference key="3">
    <citation type="journal article" date="1997" name="Science">
        <title>The complete genome sequence of Escherichia coli K-12.</title>
        <authorList>
            <person name="Blattner F.R."/>
            <person name="Plunkett G. III"/>
            <person name="Bloch C.A."/>
            <person name="Perna N.T."/>
            <person name="Burland V."/>
            <person name="Riley M."/>
            <person name="Collado-Vides J."/>
            <person name="Glasner J.D."/>
            <person name="Rode C.K."/>
            <person name="Mayhew G.F."/>
            <person name="Gregor J."/>
            <person name="Davis N.W."/>
            <person name="Kirkpatrick H.A."/>
            <person name="Goeden M.A."/>
            <person name="Rose D.J."/>
            <person name="Mau B."/>
            <person name="Shao Y."/>
        </authorList>
    </citation>
    <scope>NUCLEOTIDE SEQUENCE [LARGE SCALE GENOMIC DNA]</scope>
    <source>
        <strain>K12 / MG1655 / ATCC 47076</strain>
    </source>
</reference>
<reference key="4">
    <citation type="journal article" date="2006" name="Mol. Syst. Biol.">
        <title>Highly accurate genome sequences of Escherichia coli K-12 strains MG1655 and W3110.</title>
        <authorList>
            <person name="Hayashi K."/>
            <person name="Morooka N."/>
            <person name="Yamamoto Y."/>
            <person name="Fujita K."/>
            <person name="Isono K."/>
            <person name="Choi S."/>
            <person name="Ohtsubo E."/>
            <person name="Baba T."/>
            <person name="Wanner B.L."/>
            <person name="Mori H."/>
            <person name="Horiuchi T."/>
        </authorList>
    </citation>
    <scope>NUCLEOTIDE SEQUENCE [LARGE SCALE GENOMIC DNA]</scope>
    <source>
        <strain>K12 / W3110 / ATCC 27325 / DSM 5911</strain>
    </source>
</reference>
<gene>
    <name type="primary">yibG</name>
    <name type="ordered locus">b3596</name>
    <name type="ordered locus">JW3570</name>
</gene>
<protein>
    <recommendedName>
        <fullName>Uncharacterized protein YibG</fullName>
    </recommendedName>
    <alternativeName>
        <fullName>ORF-A3</fullName>
    </alternativeName>
</protein>
<accession>P32106</accession>
<accession>Q2M7Q9</accession>
<keyword id="KW-1185">Reference proteome</keyword>
<keyword id="KW-0732">Signal</keyword>
<sequence>MKACLLLFFYFSFICQLHGADVKIKQNESMMGSTAMTYDLSEEKLMKLKYKSQHGDSEASFRLYQYYCFTKNNIYKQLRFLERSASQGNVTAQFNYGVFLSDTNPTLSEYYNLNRAIYWMEFAVNNGNIDAKSKLQELKKLKRMDRRKNKENP</sequence>